<comment type="function">
    <text evidence="1">Major role in the synthesis of nucleoside triphosphates other than ATP. The ATP gamma phosphate is transferred to the NDP beta phosphate via a ping-pong mechanism, using a phosphorylated active-site intermediate.</text>
</comment>
<comment type="catalytic activity">
    <reaction evidence="1">
        <text>a 2'-deoxyribonucleoside 5'-diphosphate + ATP = a 2'-deoxyribonucleoside 5'-triphosphate + ADP</text>
        <dbReference type="Rhea" id="RHEA:44640"/>
        <dbReference type="ChEBI" id="CHEBI:30616"/>
        <dbReference type="ChEBI" id="CHEBI:61560"/>
        <dbReference type="ChEBI" id="CHEBI:73316"/>
        <dbReference type="ChEBI" id="CHEBI:456216"/>
        <dbReference type="EC" id="2.7.4.6"/>
    </reaction>
</comment>
<comment type="catalytic activity">
    <reaction evidence="1">
        <text>a ribonucleoside 5'-diphosphate + ATP = a ribonucleoside 5'-triphosphate + ADP</text>
        <dbReference type="Rhea" id="RHEA:18113"/>
        <dbReference type="ChEBI" id="CHEBI:30616"/>
        <dbReference type="ChEBI" id="CHEBI:57930"/>
        <dbReference type="ChEBI" id="CHEBI:61557"/>
        <dbReference type="ChEBI" id="CHEBI:456216"/>
        <dbReference type="EC" id="2.7.4.6"/>
    </reaction>
</comment>
<comment type="cofactor">
    <cofactor evidence="1">
        <name>Mg(2+)</name>
        <dbReference type="ChEBI" id="CHEBI:18420"/>
    </cofactor>
</comment>
<comment type="subunit">
    <text evidence="1">Homotetramer.</text>
</comment>
<comment type="subcellular location">
    <subcellularLocation>
        <location evidence="1">Cytoplasm</location>
    </subcellularLocation>
</comment>
<comment type="similarity">
    <text evidence="1">Belongs to the NDK family.</text>
</comment>
<gene>
    <name evidence="1" type="primary">ndk</name>
    <name type="ordered locus">XOO2393</name>
</gene>
<dbReference type="EC" id="2.7.4.6" evidence="1"/>
<dbReference type="EMBL" id="AP008229">
    <property type="protein sequence ID" value="BAE69148.1"/>
    <property type="molecule type" value="Genomic_DNA"/>
</dbReference>
<dbReference type="RefSeq" id="WP_002812972.1">
    <property type="nucleotide sequence ID" value="NC_007705.1"/>
</dbReference>
<dbReference type="SMR" id="Q2P2S9"/>
<dbReference type="GeneID" id="98193442"/>
<dbReference type="KEGG" id="xom:XOO2393"/>
<dbReference type="HOGENOM" id="CLU_060216_8_1_6"/>
<dbReference type="GO" id="GO:0005737">
    <property type="term" value="C:cytoplasm"/>
    <property type="evidence" value="ECO:0007669"/>
    <property type="project" value="UniProtKB-SubCell"/>
</dbReference>
<dbReference type="GO" id="GO:0005524">
    <property type="term" value="F:ATP binding"/>
    <property type="evidence" value="ECO:0007669"/>
    <property type="project" value="UniProtKB-UniRule"/>
</dbReference>
<dbReference type="GO" id="GO:0046872">
    <property type="term" value="F:metal ion binding"/>
    <property type="evidence" value="ECO:0007669"/>
    <property type="project" value="UniProtKB-KW"/>
</dbReference>
<dbReference type="GO" id="GO:0004550">
    <property type="term" value="F:nucleoside diphosphate kinase activity"/>
    <property type="evidence" value="ECO:0007669"/>
    <property type="project" value="UniProtKB-UniRule"/>
</dbReference>
<dbReference type="GO" id="GO:0006241">
    <property type="term" value="P:CTP biosynthetic process"/>
    <property type="evidence" value="ECO:0007669"/>
    <property type="project" value="UniProtKB-UniRule"/>
</dbReference>
<dbReference type="GO" id="GO:0006183">
    <property type="term" value="P:GTP biosynthetic process"/>
    <property type="evidence" value="ECO:0007669"/>
    <property type="project" value="UniProtKB-UniRule"/>
</dbReference>
<dbReference type="GO" id="GO:0006228">
    <property type="term" value="P:UTP biosynthetic process"/>
    <property type="evidence" value="ECO:0007669"/>
    <property type="project" value="UniProtKB-UniRule"/>
</dbReference>
<dbReference type="CDD" id="cd04413">
    <property type="entry name" value="NDPk_I"/>
    <property type="match status" value="1"/>
</dbReference>
<dbReference type="FunFam" id="3.30.70.141:FF:000001">
    <property type="entry name" value="Nucleoside diphosphate kinase"/>
    <property type="match status" value="1"/>
</dbReference>
<dbReference type="Gene3D" id="3.30.70.141">
    <property type="entry name" value="Nucleoside diphosphate kinase-like domain"/>
    <property type="match status" value="1"/>
</dbReference>
<dbReference type="HAMAP" id="MF_00451">
    <property type="entry name" value="NDP_kinase"/>
    <property type="match status" value="1"/>
</dbReference>
<dbReference type="InterPro" id="IPR034907">
    <property type="entry name" value="NDK-like_dom"/>
</dbReference>
<dbReference type="InterPro" id="IPR036850">
    <property type="entry name" value="NDK-like_dom_sf"/>
</dbReference>
<dbReference type="InterPro" id="IPR001564">
    <property type="entry name" value="Nucleoside_diP_kinase"/>
</dbReference>
<dbReference type="InterPro" id="IPR023005">
    <property type="entry name" value="Nucleoside_diP_kinase_AS"/>
</dbReference>
<dbReference type="NCBIfam" id="NF001908">
    <property type="entry name" value="PRK00668.1"/>
    <property type="match status" value="1"/>
</dbReference>
<dbReference type="PANTHER" id="PTHR11349">
    <property type="entry name" value="NUCLEOSIDE DIPHOSPHATE KINASE"/>
    <property type="match status" value="1"/>
</dbReference>
<dbReference type="Pfam" id="PF00334">
    <property type="entry name" value="NDK"/>
    <property type="match status" value="1"/>
</dbReference>
<dbReference type="PRINTS" id="PR01243">
    <property type="entry name" value="NUCDPKINASE"/>
</dbReference>
<dbReference type="SMART" id="SM00562">
    <property type="entry name" value="NDK"/>
    <property type="match status" value="1"/>
</dbReference>
<dbReference type="SUPFAM" id="SSF54919">
    <property type="entry name" value="Nucleoside diphosphate kinase, NDK"/>
    <property type="match status" value="1"/>
</dbReference>
<dbReference type="PROSITE" id="PS00469">
    <property type="entry name" value="NDPK"/>
    <property type="match status" value="1"/>
</dbReference>
<dbReference type="PROSITE" id="PS51374">
    <property type="entry name" value="NDPK_LIKE"/>
    <property type="match status" value="1"/>
</dbReference>
<sequence>MALERTLSIIKPDAVAKNVIGEIYSRFEKAGLKVVAAKYKQLSRREAEGFYAVHRERPFFNALVEFMISGPVMIQALEGENAVAAHRDLLGATNPKDAAPGTIRADFADSIDANAAHGSDSVENAANEVAYFFAATEVVSR</sequence>
<proteinExistence type="inferred from homology"/>
<organism>
    <name type="scientific">Xanthomonas oryzae pv. oryzae (strain MAFF 311018)</name>
    <dbReference type="NCBI Taxonomy" id="342109"/>
    <lineage>
        <taxon>Bacteria</taxon>
        <taxon>Pseudomonadati</taxon>
        <taxon>Pseudomonadota</taxon>
        <taxon>Gammaproteobacteria</taxon>
        <taxon>Lysobacterales</taxon>
        <taxon>Lysobacteraceae</taxon>
        <taxon>Xanthomonas</taxon>
    </lineage>
</organism>
<name>NDK_XANOM</name>
<reference key="1">
    <citation type="journal article" date="2005" name="Jpn. Agric. Res. Q.">
        <title>Genome sequence of Xanthomonas oryzae pv. oryzae suggests contribution of large numbers of effector genes and insertion sequences to its race diversity.</title>
        <authorList>
            <person name="Ochiai H."/>
            <person name="Inoue Y."/>
            <person name="Takeya M."/>
            <person name="Sasaki A."/>
            <person name="Kaku H."/>
        </authorList>
    </citation>
    <scope>NUCLEOTIDE SEQUENCE [LARGE SCALE GENOMIC DNA]</scope>
    <source>
        <strain>MAFF 311018</strain>
    </source>
</reference>
<feature type="chain" id="PRO_0000242525" description="Nucleoside diphosphate kinase">
    <location>
        <begin position="1"/>
        <end position="141"/>
    </location>
</feature>
<feature type="active site" description="Pros-phosphohistidine intermediate" evidence="1">
    <location>
        <position position="117"/>
    </location>
</feature>
<feature type="binding site" evidence="1">
    <location>
        <position position="11"/>
    </location>
    <ligand>
        <name>ATP</name>
        <dbReference type="ChEBI" id="CHEBI:30616"/>
    </ligand>
</feature>
<feature type="binding site" evidence="1">
    <location>
        <position position="59"/>
    </location>
    <ligand>
        <name>ATP</name>
        <dbReference type="ChEBI" id="CHEBI:30616"/>
    </ligand>
</feature>
<feature type="binding site" evidence="1">
    <location>
        <position position="87"/>
    </location>
    <ligand>
        <name>ATP</name>
        <dbReference type="ChEBI" id="CHEBI:30616"/>
    </ligand>
</feature>
<feature type="binding site" evidence="1">
    <location>
        <position position="93"/>
    </location>
    <ligand>
        <name>ATP</name>
        <dbReference type="ChEBI" id="CHEBI:30616"/>
    </ligand>
</feature>
<feature type="binding site" evidence="1">
    <location>
        <position position="104"/>
    </location>
    <ligand>
        <name>ATP</name>
        <dbReference type="ChEBI" id="CHEBI:30616"/>
    </ligand>
</feature>
<feature type="binding site" evidence="1">
    <location>
        <position position="114"/>
    </location>
    <ligand>
        <name>ATP</name>
        <dbReference type="ChEBI" id="CHEBI:30616"/>
    </ligand>
</feature>
<accession>Q2P2S9</accession>
<keyword id="KW-0067">ATP-binding</keyword>
<keyword id="KW-0963">Cytoplasm</keyword>
<keyword id="KW-0418">Kinase</keyword>
<keyword id="KW-0460">Magnesium</keyword>
<keyword id="KW-0479">Metal-binding</keyword>
<keyword id="KW-0546">Nucleotide metabolism</keyword>
<keyword id="KW-0547">Nucleotide-binding</keyword>
<keyword id="KW-0597">Phosphoprotein</keyword>
<keyword id="KW-0808">Transferase</keyword>
<protein>
    <recommendedName>
        <fullName evidence="1">Nucleoside diphosphate kinase</fullName>
        <shortName evidence="1">NDK</shortName>
        <shortName evidence="1">NDP kinase</shortName>
        <ecNumber evidence="1">2.7.4.6</ecNumber>
    </recommendedName>
    <alternativeName>
        <fullName evidence="1">Nucleoside-2-P kinase</fullName>
    </alternativeName>
</protein>
<evidence type="ECO:0000255" key="1">
    <source>
        <dbReference type="HAMAP-Rule" id="MF_00451"/>
    </source>
</evidence>